<sequence>MGRAGGGGPGWGPPPVLLLLGVTLVLTAGAVPAREAGSAIEAEELVRSGLAWESRANDTREEAGLPAAGEDETSWTERGSELAAVGPGVGPEETLEASAAVTGTAWLEADGTGLGGVTAEAGSGDAQTLPATLQAPDEALGSSTMPPAIPEATEASGPPSPTLRDKPSLVPELPKEIPLEVWLNLGGSTPDPQRPEPTFPLQGTLETQPASDIIDIDYFEGLDSEGRGTDMGRFPGSPGTSENHPDTEGETPSWSLLDLYDDFTPFDESDFYPTTSFYDDLEEEEEEEEDKDAVGGGDLEDESDLLLPSQKPGVGPGTGQPTSRWHAVPPQHTLGMVPGGSISLRPRPGDPGKDLATSENGTECRVGFVRHNGSCRSVCDLFPSYCHNGGQCYLVENIGAFCRCNTQDYIWHKGMRCESIITDFQVMCVAVGSAALVLLLLFMMTVFFAKKLYLLKTENTKLRRTNKFRTPSELHNDNFSLSTIAEGSHPNVRKLCDTPCVSSPHARALAHCDNIVCQDDPSAPHKIQEALKSRLKEEESFNIQNSMSPKLEGGKGDQDDLEVNCLQNNLT</sequence>
<keyword id="KW-0025">Alternative splicing</keyword>
<keyword id="KW-1003">Cell membrane</keyword>
<keyword id="KW-0217">Developmental protein</keyword>
<keyword id="KW-0221">Differentiation</keyword>
<keyword id="KW-0903">Direct protein sequencing</keyword>
<keyword id="KW-1015">Disulfide bond</keyword>
<keyword id="KW-0245">EGF-like domain</keyword>
<keyword id="KW-0256">Endoplasmic reticulum</keyword>
<keyword id="KW-0325">Glycoprotein</keyword>
<keyword id="KW-0333">Golgi apparatus</keyword>
<keyword id="KW-0341">Growth regulation</keyword>
<keyword id="KW-0472">Membrane</keyword>
<keyword id="KW-0524">Neurogenesis</keyword>
<keyword id="KW-0597">Phosphoprotein</keyword>
<keyword id="KW-0654">Proteoglycan</keyword>
<keyword id="KW-1185">Reference proteome</keyword>
<keyword id="KW-0964">Secreted</keyword>
<keyword id="KW-0732">Signal</keyword>
<keyword id="KW-0770">Synapse</keyword>
<keyword id="KW-0812">Transmembrane</keyword>
<keyword id="KW-1133">Transmembrane helix</keyword>
<organism>
    <name type="scientific">Rattus norvegicus</name>
    <name type="common">Rat</name>
    <dbReference type="NCBI Taxonomy" id="10116"/>
    <lineage>
        <taxon>Eukaryota</taxon>
        <taxon>Metazoa</taxon>
        <taxon>Chordata</taxon>
        <taxon>Craniata</taxon>
        <taxon>Vertebrata</taxon>
        <taxon>Euteleostomi</taxon>
        <taxon>Mammalia</taxon>
        <taxon>Eutheria</taxon>
        <taxon>Euarchontoglires</taxon>
        <taxon>Glires</taxon>
        <taxon>Rodentia</taxon>
        <taxon>Myomorpha</taxon>
        <taxon>Muroidea</taxon>
        <taxon>Muridae</taxon>
        <taxon>Murinae</taxon>
        <taxon>Rattus</taxon>
    </lineage>
</organism>
<comment type="function">
    <text>May function as a growth and differentiation factor involved in neuritogenesis. May induce ERBB3 activation.</text>
</comment>
<comment type="subunit">
    <text evidence="1 10">Interacts with ERBB3 and GOPC. Binds TNR and probably TNC (By similarity). Interacts with MDK; this interaction is independent of the presence of chondroitin sulfate chains and promotes elongation of oligodendroglial precursor-like cells (PubMed:16901907).</text>
</comment>
<comment type="subcellular location">
    <subcellularLocation>
        <location evidence="8">Cell membrane</location>
        <topology evidence="8">Single-pass type I membrane protein</topology>
    </subcellularLocation>
    <subcellularLocation>
        <location evidence="3">Synaptic cell membrane</location>
        <topology evidence="3">Single-pass type I membrane protein</topology>
    </subcellularLocation>
    <subcellularLocation>
        <location evidence="3">Endoplasmic reticulum membrane</location>
        <topology evidence="3">Single-pass type I membrane protein</topology>
    </subcellularLocation>
    <subcellularLocation>
        <location evidence="3">Golgi apparatus membrane</location>
        <topology evidence="3">Single-pass type I membrane protein</topology>
    </subcellularLocation>
    <subcellularLocation>
        <location evidence="3">Cell surface</location>
    </subcellularLocation>
    <subcellularLocation>
        <location evidence="2">Secreted</location>
    </subcellularLocation>
    <text evidence="3 8">In neurons, localizes to synaptic junctions. Also detected in the endoplasmic reticulum and the Golgi (By similarity). Partially enriched in lipid rafts (PubMed:11929867).</text>
</comment>
<comment type="alternative products">
    <event type="alternative splicing"/>
    <isoform>
        <id>Q9ERQ6-1</id>
        <name>1</name>
        <sequence type="displayed"/>
    </isoform>
    <isoform>
        <id>Q9ERQ6-2</id>
        <name>2</name>
        <sequence type="described" ref="VSP_015765"/>
    </isoform>
</comment>
<comment type="tissue specificity">
    <text evidence="6 7 11 12">Expressed in cerebral cortex and cerebellum. Expressed in retina (at protein level).</text>
</comment>
<comment type="developmental stage">
    <text evidence="7 11">Expression starts at 16 dpc in the cerebral cortex and increases to reach a maximum 20 days after birth. Then it decreases till adulthood to be expressed half of the peak level. In the retina, expression reaches a maximum at postnatal day 14 (P14). It starts weakly at 16 dpc in the retinal pigment epithelium (RPE). At P0 it is detected in nerve fiber layer (NFL), ganglion cell layer (GCL), inner plexiform layer (IPL) and RPE. At P7, it becomes intense in the NFL and IPL. At P14, expression becomes intense in the area of outer segments (OS) of the photoreceptor cells as well as in RPE, whereas in the inner layers it becomes gradually fainter. From P21 to P42, it decreases in inner retinal layers. OS and RPE still express, whereas expression in the NFL and IPL decreases (at protein level).</text>
</comment>
<comment type="induction">
    <text evidence="9">Up-regulated in nucleus accumbens shell by cocaine administration.</text>
</comment>
<comment type="PTM">
    <text evidence="11 12">N-glycosylated.</text>
</comment>
<comment type="PTM">
    <text evidence="3">O-glycosylated; contains chondroitin sulfate glycans. Part-time proteoglycan, expressed in part as a proteoglycan exhibiting chondroitin sulfate glycans and in part as a non-proteoglycan form. The relative amount of both forms depends on tissues and tissue maturation (By similarity).</text>
</comment>
<comment type="PTM">
    <text evidence="8">Phosphorylated; in intracellular and extracellular parts.</text>
</comment>
<comment type="miscellaneous">
    <text evidence="1">Different forms of various molecular weight have been observed. Such forms are possibly due to different levels of glycosylation, phosphorylation and/or protein cleavage (By similarity).</text>
</comment>
<feature type="signal peptide" evidence="11">
    <location>
        <begin position="1"/>
        <end position="30"/>
    </location>
</feature>
<feature type="chain" id="PRO_0000042153" description="Chondroitin sulfate proteoglycan 5">
    <location>
        <begin position="31"/>
        <end position="571"/>
    </location>
</feature>
<feature type="topological domain" description="Extracellular" evidence="4">
    <location>
        <begin position="31"/>
        <end position="428"/>
    </location>
</feature>
<feature type="transmembrane region" description="Helical" evidence="4">
    <location>
        <begin position="429"/>
        <end position="449"/>
    </location>
</feature>
<feature type="topological domain" description="Cytoplasmic" evidence="4">
    <location>
        <begin position="450"/>
        <end position="571"/>
    </location>
</feature>
<feature type="domain" description="EGF-like">
    <location>
        <begin position="376"/>
        <end position="418"/>
    </location>
</feature>
<feature type="region of interest" description="Disordered" evidence="5">
    <location>
        <begin position="57"/>
        <end position="91"/>
    </location>
</feature>
<feature type="region of interest" description="Disordered" evidence="5">
    <location>
        <begin position="137"/>
        <end position="169"/>
    </location>
</feature>
<feature type="region of interest" description="Disordered" evidence="5">
    <location>
        <begin position="186"/>
        <end position="254"/>
    </location>
</feature>
<feature type="region of interest" description="Interaction with TNC and TNR" evidence="1">
    <location>
        <begin position="270"/>
        <end position="306"/>
    </location>
</feature>
<feature type="region of interest" description="Disordered" evidence="5">
    <location>
        <begin position="279"/>
        <end position="357"/>
    </location>
</feature>
<feature type="region of interest" description="Interaction with GOPC" evidence="1">
    <location>
        <begin position="447"/>
        <end position="465"/>
    </location>
</feature>
<feature type="region of interest" description="Disordered" evidence="5">
    <location>
        <begin position="538"/>
        <end position="563"/>
    </location>
</feature>
<feature type="compositionally biased region" description="Acidic residues" evidence="5">
    <location>
        <begin position="214"/>
        <end position="223"/>
    </location>
</feature>
<feature type="compositionally biased region" description="Acidic residues" evidence="5">
    <location>
        <begin position="279"/>
        <end position="291"/>
    </location>
</feature>
<feature type="modified residue" description="Phosphoserine" evidence="3">
    <location>
        <position position="472"/>
    </location>
</feature>
<feature type="modified residue" description="Phosphoserine" evidence="3">
    <location>
        <position position="480"/>
    </location>
</feature>
<feature type="modified residue" description="Phosphoserine" evidence="3">
    <location>
        <position position="488"/>
    </location>
</feature>
<feature type="modified residue" description="Phosphoserine" evidence="3">
    <location>
        <position position="548"/>
    </location>
</feature>
<feature type="glycosylation site" description="O-linked (Xyl...) (chondroitin sulfate) serine" evidence="2">
    <location>
        <position position="38"/>
    </location>
</feature>
<feature type="glycosylation site" description="N-linked (GlcNAc...) asparagine" evidence="4">
    <location>
        <position position="57"/>
    </location>
</feature>
<feature type="glycosylation site" description="O-linked (GalNAc...) threonine" evidence="4">
    <location>
        <position position="76"/>
    </location>
</feature>
<feature type="glycosylation site" description="O-linked (Xyl...) (chondroitin sulfate) serine" evidence="1">
    <location>
        <position position="123"/>
    </location>
</feature>
<feature type="glycosylation site" description="O-linked (GalNAc...) threonine" evidence="4">
    <location>
        <position position="132"/>
    </location>
</feature>
<feature type="glycosylation site" description="O-linked (GalNAc...) serine" evidence="4">
    <location>
        <position position="143"/>
    </location>
</feature>
<feature type="glycosylation site" description="O-linked (GalNAc...) threonine" evidence="4">
    <location>
        <position position="144"/>
    </location>
</feature>
<feature type="glycosylation site" description="O-linked (GalNAc...) threonine" evidence="4">
    <location>
        <position position="153"/>
    </location>
</feature>
<feature type="glycosylation site" description="O-linked (GalNAc...) serine" evidence="4">
    <location>
        <position position="156"/>
    </location>
</feature>
<feature type="glycosylation site" description="O-linked (GalNAc...) serine" evidence="4">
    <location>
        <position position="160"/>
    </location>
</feature>
<feature type="glycosylation site" description="O-linked (GalNAc...) threonine" evidence="4">
    <location>
        <position position="162"/>
    </location>
</feature>
<feature type="glycosylation site" description="O-linked (GalNAc...) threonine" evidence="4">
    <location>
        <position position="198"/>
    </location>
</feature>
<feature type="glycosylation site" description="O-linked (GalNAc...) threonine" evidence="4">
    <location>
        <position position="240"/>
    </location>
</feature>
<feature type="glycosylation site" description="O-linked (GalNAc...) threonine" evidence="4">
    <location>
        <position position="318"/>
    </location>
</feature>
<feature type="glycosylation site" description="O-linked (GalNAc...) threonine" evidence="4">
    <location>
        <position position="322"/>
    </location>
</feature>
<feature type="glycosylation site" description="N-linked (GlcNAc...) asparagine" evidence="4">
    <location>
        <position position="372"/>
    </location>
</feature>
<feature type="disulfide bond" evidence="1">
    <location>
        <begin position="379"/>
        <end position="392"/>
    </location>
</feature>
<feature type="disulfide bond" evidence="1">
    <location>
        <begin position="386"/>
        <end position="402"/>
    </location>
</feature>
<feature type="disulfide bond" evidence="1">
    <location>
        <begin position="404"/>
        <end position="417"/>
    </location>
</feature>
<feature type="splice variant" id="VSP_015765" description="In isoform 2." evidence="13">
    <location>
        <begin position="492"/>
        <end position="518"/>
    </location>
</feature>
<feature type="sequence conflict" description="In Ref. 1; AAC98537." evidence="14" ref="1">
    <original>C</original>
    <variation>F</variation>
    <location>
        <position position="565"/>
    </location>
</feature>
<dbReference type="EMBL" id="U33553">
    <property type="protein sequence ID" value="AAC98537.1"/>
    <property type="molecule type" value="mRNA"/>
</dbReference>
<dbReference type="EMBL" id="AF292102">
    <property type="protein sequence ID" value="AAG29500.1"/>
    <property type="molecule type" value="mRNA"/>
</dbReference>
<dbReference type="PIR" id="I55454">
    <property type="entry name" value="I55454"/>
</dbReference>
<dbReference type="RefSeq" id="NP_062157.2">
    <molecule id="Q9ERQ6-2"/>
    <property type="nucleotide sequence ID" value="NM_019284.3"/>
</dbReference>
<dbReference type="RefSeq" id="NP_598413.1">
    <molecule id="Q9ERQ6-1"/>
    <property type="nucleotide sequence ID" value="NM_133652.2"/>
</dbReference>
<dbReference type="BioGRID" id="248393">
    <property type="interactions" value="1"/>
</dbReference>
<dbReference type="FunCoup" id="Q9ERQ6">
    <property type="interactions" value="1518"/>
</dbReference>
<dbReference type="STRING" id="10116.ENSRNOP00000028278"/>
<dbReference type="GlyCosmos" id="Q9ERQ6">
    <property type="glycosylation" value="15 sites, No reported glycans"/>
</dbReference>
<dbReference type="GlyGen" id="Q9ERQ6">
    <property type="glycosylation" value="16 sites"/>
</dbReference>
<dbReference type="iPTMnet" id="Q9ERQ6"/>
<dbReference type="PhosphoSitePlus" id="Q9ERQ6"/>
<dbReference type="PaxDb" id="10116-ENSRNOP00000028278"/>
<dbReference type="Ensembl" id="ENSRNOT00000028278.8">
    <molecule id="Q9ERQ6-1"/>
    <property type="protein sequence ID" value="ENSRNOP00000028278.8"/>
    <property type="gene ID" value="ENSRNOG00000020833.8"/>
</dbReference>
<dbReference type="GeneID" id="50568"/>
<dbReference type="KEGG" id="rno:50568"/>
<dbReference type="UCSC" id="RGD:2431">
    <molecule id="Q9ERQ6-1"/>
    <property type="organism name" value="rat"/>
</dbReference>
<dbReference type="AGR" id="RGD:2431"/>
<dbReference type="CTD" id="10675"/>
<dbReference type="RGD" id="2431">
    <property type="gene designation" value="Cspg5"/>
</dbReference>
<dbReference type="eggNOG" id="ENOG502QXSB">
    <property type="taxonomic scope" value="Eukaryota"/>
</dbReference>
<dbReference type="GeneTree" id="ENSGT00440000034270"/>
<dbReference type="InParanoid" id="Q9ERQ6"/>
<dbReference type="OMA" id="WEPHAND"/>
<dbReference type="OrthoDB" id="9935774at2759"/>
<dbReference type="PhylomeDB" id="Q9ERQ6"/>
<dbReference type="Reactome" id="R-RNO-1971475">
    <property type="pathway name" value="A tetrasaccharide linker sequence is required for GAG synthesis"/>
</dbReference>
<dbReference type="Reactome" id="R-RNO-2022870">
    <property type="pathway name" value="Chondroitin sulfate biosynthesis"/>
</dbReference>
<dbReference type="Reactome" id="R-RNO-2022923">
    <property type="pathway name" value="Dermatan sulfate biosynthesis"/>
</dbReference>
<dbReference type="Reactome" id="R-RNO-2024101">
    <property type="pathway name" value="CS/DS degradation"/>
</dbReference>
<dbReference type="PRO" id="PR:Q9ERQ6"/>
<dbReference type="Proteomes" id="UP000002494">
    <property type="component" value="Chromosome 8"/>
</dbReference>
<dbReference type="GO" id="GO:0009986">
    <property type="term" value="C:cell surface"/>
    <property type="evidence" value="ECO:0007669"/>
    <property type="project" value="UniProtKB-SubCell"/>
</dbReference>
<dbReference type="GO" id="GO:0005789">
    <property type="term" value="C:endoplasmic reticulum membrane"/>
    <property type="evidence" value="ECO:0007669"/>
    <property type="project" value="UniProtKB-SubCell"/>
</dbReference>
<dbReference type="GO" id="GO:0005576">
    <property type="term" value="C:extracellular region"/>
    <property type="evidence" value="ECO:0007669"/>
    <property type="project" value="UniProtKB-SubCell"/>
</dbReference>
<dbReference type="GO" id="GO:0098982">
    <property type="term" value="C:GABA-ergic synapse"/>
    <property type="evidence" value="ECO:0000266"/>
    <property type="project" value="RGD"/>
</dbReference>
<dbReference type="GO" id="GO:0098978">
    <property type="term" value="C:glutamatergic synapse"/>
    <property type="evidence" value="ECO:0000266"/>
    <property type="project" value="RGD"/>
</dbReference>
<dbReference type="GO" id="GO:0005794">
    <property type="term" value="C:Golgi apparatus"/>
    <property type="evidence" value="ECO:0000250"/>
    <property type="project" value="UniProtKB"/>
</dbReference>
<dbReference type="GO" id="GO:0000139">
    <property type="term" value="C:Golgi membrane"/>
    <property type="evidence" value="ECO:0007669"/>
    <property type="project" value="UniProtKB-SubCell"/>
</dbReference>
<dbReference type="GO" id="GO:0030660">
    <property type="term" value="C:Golgi-associated vesicle membrane"/>
    <property type="evidence" value="ECO:0000250"/>
    <property type="project" value="UniProtKB"/>
</dbReference>
<dbReference type="GO" id="GO:0045211">
    <property type="term" value="C:postsynaptic membrane"/>
    <property type="evidence" value="ECO:0000266"/>
    <property type="project" value="RGD"/>
</dbReference>
<dbReference type="GO" id="GO:0045202">
    <property type="term" value="C:synapse"/>
    <property type="evidence" value="ECO:0000318"/>
    <property type="project" value="GO_Central"/>
</dbReference>
<dbReference type="GO" id="GO:0031103">
    <property type="term" value="P:axon regeneration"/>
    <property type="evidence" value="ECO:0000270"/>
    <property type="project" value="RGD"/>
</dbReference>
<dbReference type="GO" id="GO:0048858">
    <property type="term" value="P:cell projection morphogenesis"/>
    <property type="evidence" value="ECO:0000318"/>
    <property type="project" value="GO_Central"/>
</dbReference>
<dbReference type="GO" id="GO:0007010">
    <property type="term" value="P:cytoskeleton organization"/>
    <property type="evidence" value="ECO:0000315"/>
    <property type="project" value="UniProtKB"/>
</dbReference>
<dbReference type="GO" id="GO:0106091">
    <property type="term" value="P:glial cell projection elongation"/>
    <property type="evidence" value="ECO:0000314"/>
    <property type="project" value="UniProtKB"/>
</dbReference>
<dbReference type="GO" id="GO:0050804">
    <property type="term" value="P:modulation of chemical synaptic transmission"/>
    <property type="evidence" value="ECO:0000266"/>
    <property type="project" value="RGD"/>
</dbReference>
<dbReference type="GO" id="GO:1900026">
    <property type="term" value="P:positive regulation of substrate adhesion-dependent cell spreading"/>
    <property type="evidence" value="ECO:0000315"/>
    <property type="project" value="UniProtKB"/>
</dbReference>
<dbReference type="GO" id="GO:2000300">
    <property type="term" value="P:regulation of synaptic vesicle exocytosis"/>
    <property type="evidence" value="ECO:0000266"/>
    <property type="project" value="RGD"/>
</dbReference>
<dbReference type="InterPro" id="IPR010555">
    <property type="entry name" value="CSPG5_S_attach_dom"/>
</dbReference>
<dbReference type="InterPro" id="IPR009505">
    <property type="entry name" value="Neural_ProG_Cyt"/>
</dbReference>
<dbReference type="PANTHER" id="PTHR15381:SF2">
    <property type="entry name" value="CHONDROITIN SULFATE PROTEOGLYCAN 5"/>
    <property type="match status" value="1"/>
</dbReference>
<dbReference type="PANTHER" id="PTHR15381">
    <property type="entry name" value="CHONDROITIN SULFATE PROTEOGLYCAN 5 -RELATED"/>
    <property type="match status" value="1"/>
</dbReference>
<dbReference type="Pfam" id="PF06566">
    <property type="entry name" value="Chon_Sulph_att"/>
    <property type="match status" value="1"/>
</dbReference>
<dbReference type="Pfam" id="PF06567">
    <property type="entry name" value="Neural_ProG_Cyt"/>
    <property type="match status" value="1"/>
</dbReference>
<proteinExistence type="evidence at protein level"/>
<protein>
    <recommendedName>
        <fullName>Chondroitin sulfate proteoglycan 5</fullName>
    </recommendedName>
    <alternativeName>
        <fullName>Acidic leucine-rich EGF-like domain-containing brain protein</fullName>
    </alternativeName>
    <alternativeName>
        <fullName>Neuroglycan C</fullName>
    </alternativeName>
</protein>
<gene>
    <name type="primary">Cspg5</name>
    <name type="synonym">Caleb</name>
    <name type="synonym">Ngc</name>
</gene>
<accession>Q9ERQ6</accession>
<accession>Q62831</accession>
<reference key="1">
    <citation type="journal article" date="1995" name="J. Biol. Chem.">
        <title>Neuroglycan C, a novel membrane-spanning chondroitin sulfate proteoglycan that is restricted to the brain.</title>
        <authorList>
            <person name="Watanabe E."/>
            <person name="Maeda N."/>
            <person name="Matsui F."/>
            <person name="Kushima Y."/>
            <person name="Noda M."/>
            <person name="Oohira A."/>
        </authorList>
    </citation>
    <scope>NUCLEOTIDE SEQUENCE [MRNA] (ISOFORM 2)</scope>
    <scope>PROTEIN SEQUENCE OF 31-45; 232-238 AND 337-356</scope>
    <scope>TISSUE SPECIFICITY</scope>
    <scope>DEVELOPMENTAL STAGE</scope>
    <scope>GLYCOSYLATION</scope>
    <source>
        <strain>Sprague-Dawley</strain>
        <tissue>Brain</tissue>
    </source>
</reference>
<reference key="2">
    <citation type="journal article" date="2001" name="J. Biol. Chem.">
        <title>CALEB binds via its acidic stretch to the fibrinogen-like domain of tenascin-C or tenascin-R and its expression is dynamically regulated after optic nerve lesion.</title>
        <authorList>
            <person name="Schumacher S."/>
            <person name="Jung M."/>
            <person name="Noerenberg U."/>
            <person name="Dorner A."/>
            <person name="Chiquet-Ehrismann R."/>
            <person name="Stuermer C.A.O."/>
            <person name="Rathjen F.G."/>
        </authorList>
    </citation>
    <scope>NUCLEOTIDE SEQUENCE [MRNA] (ISOFORM 1)</scope>
    <scope>TISSUE SPECIFICITY</scope>
    <source>
        <strain>Sprague-Dawley</strain>
    </source>
</reference>
<reference key="3">
    <citation type="journal article" date="1998" name="Neurosci. Res.">
        <title>Cloning and chromosomal mapping of the human gene of neuroglycan C (NGC), a neural transmembrane chondroitin sulfate proteoglycan with an EGF module.</title>
        <authorList>
            <person name="Yasuda Y."/>
            <person name="Tokita Y."/>
            <person name="Aono S."/>
            <person name="Matsui F."/>
            <person name="Ono T."/>
            <person name="Sonta S."/>
            <person name="Watanabe E."/>
            <person name="Nakanishi Y."/>
            <person name="Oohira A."/>
        </authorList>
    </citation>
    <scope>TISSUE SPECIFICITY</scope>
    <scope>GLYCOSYLATION</scope>
    <source>
        <tissue>Brain</tissue>
    </source>
</reference>
<reference key="4">
    <citation type="journal article" date="2000" name="Invest. Ophthalmol. Vis. Sci.">
        <title>Neuroglycan C, a neural tissue-specific transmembrane chondroitin sulfate proteoglycan, in retinal neural network formation.</title>
        <authorList>
            <person name="Inatani M."/>
            <person name="Tanihara H."/>
            <person name="Oohira A."/>
            <person name="Otori Y."/>
            <person name="Nishida A."/>
            <person name="Honjo M."/>
            <person name="Kido N."/>
            <person name="Honda Y."/>
        </authorList>
    </citation>
    <scope>DEVELOPMENTAL STAGE</scope>
    <scope>TISSUE SPECIFICITY</scope>
</reference>
<reference key="5">
    <citation type="journal article" date="2002" name="J. Biol. Chem.">
        <title>Phosphorylation of neuroglycan C, a brain-specific transmembrane chondroitin sulfate proteoglycan, and its localization in the lipid rafts.</title>
        <authorList>
            <person name="Yamauchi S."/>
            <person name="Tokita Y."/>
            <person name="Aono S."/>
            <person name="Matsui F."/>
            <person name="Shuo T."/>
            <person name="Ito H."/>
            <person name="Kato K."/>
            <person name="Kasahara K."/>
            <person name="Oohira A."/>
        </authorList>
    </citation>
    <scope>PHOSPHORYLATION</scope>
    <scope>SUBCELLULAR LOCATION</scope>
</reference>
<reference key="6">
    <citation type="journal article" date="2002" name="J. Neurochem.">
        <title>Repeated cocaine administration alters the expression of genes in corticolimbic circuitry after a 3-week withdrawal: a DNA macroarray study.</title>
        <authorList>
            <person name="Toda S."/>
            <person name="McGinty J.F."/>
            <person name="Kalivas P.W."/>
        </authorList>
    </citation>
    <scope>INDUCTION</scope>
</reference>
<reference key="7">
    <citation type="journal article" date="2006" name="J. Biol. Chem.">
        <title>Neuroglycan C is a novel midkine receptor involved in process elongation of oligodendroglial precursor-like cells.</title>
        <authorList>
            <person name="Ichihara-Tanaka K."/>
            <person name="Oohira A."/>
            <person name="Rumsby M."/>
            <person name="Muramatsu T."/>
        </authorList>
    </citation>
    <scope>INTERACTION WITH MDK</scope>
</reference>
<name>CSPG5_RAT</name>
<evidence type="ECO:0000250" key="1"/>
<evidence type="ECO:0000250" key="2">
    <source>
        <dbReference type="UniProtKB" id="O95196"/>
    </source>
</evidence>
<evidence type="ECO:0000250" key="3">
    <source>
        <dbReference type="UniProtKB" id="Q71M36"/>
    </source>
</evidence>
<evidence type="ECO:0000255" key="4"/>
<evidence type="ECO:0000256" key="5">
    <source>
        <dbReference type="SAM" id="MobiDB-lite"/>
    </source>
</evidence>
<evidence type="ECO:0000269" key="6">
    <source>
    </source>
</evidence>
<evidence type="ECO:0000269" key="7">
    <source>
    </source>
</evidence>
<evidence type="ECO:0000269" key="8">
    <source>
    </source>
</evidence>
<evidence type="ECO:0000269" key="9">
    <source>
    </source>
</evidence>
<evidence type="ECO:0000269" key="10">
    <source>
    </source>
</evidence>
<evidence type="ECO:0000269" key="11">
    <source>
    </source>
</evidence>
<evidence type="ECO:0000269" key="12">
    <source>
    </source>
</evidence>
<evidence type="ECO:0000303" key="13">
    <source>
    </source>
</evidence>
<evidence type="ECO:0000305" key="14"/>